<accession>P9WM50</accession>
<accession>L0T646</accession>
<accession>Q11058</accession>
<feature type="chain" id="PRO_0000427365" description="Uncharacterized protein MT1298">
    <location>
        <begin position="1"/>
        <end position="372"/>
    </location>
</feature>
<protein>
    <recommendedName>
        <fullName>Uncharacterized protein MT1298</fullName>
    </recommendedName>
</protein>
<proteinExistence type="predicted"/>
<keyword id="KW-1185">Reference proteome</keyword>
<evidence type="ECO:0000305" key="1"/>
<gene>
    <name type="ordered locus">MT1298</name>
</gene>
<comment type="sequence caution" evidence="1">
    <conflict type="erroneous initiation">
        <sequence resource="EMBL-CDS" id="AAK45557"/>
    </conflict>
</comment>
<organism>
    <name type="scientific">Mycobacterium tuberculosis (strain CDC 1551 / Oshkosh)</name>
    <dbReference type="NCBI Taxonomy" id="83331"/>
    <lineage>
        <taxon>Bacteria</taxon>
        <taxon>Bacillati</taxon>
        <taxon>Actinomycetota</taxon>
        <taxon>Actinomycetes</taxon>
        <taxon>Mycobacteriales</taxon>
        <taxon>Mycobacteriaceae</taxon>
        <taxon>Mycobacterium</taxon>
        <taxon>Mycobacterium tuberculosis complex</taxon>
    </lineage>
</organism>
<reference key="1">
    <citation type="journal article" date="2002" name="J. Bacteriol.">
        <title>Whole-genome comparison of Mycobacterium tuberculosis clinical and laboratory strains.</title>
        <authorList>
            <person name="Fleischmann R.D."/>
            <person name="Alland D."/>
            <person name="Eisen J.A."/>
            <person name="Carpenter L."/>
            <person name="White O."/>
            <person name="Peterson J.D."/>
            <person name="DeBoy R.T."/>
            <person name="Dodson R.J."/>
            <person name="Gwinn M.L."/>
            <person name="Haft D.H."/>
            <person name="Hickey E.K."/>
            <person name="Kolonay J.F."/>
            <person name="Nelson W.C."/>
            <person name="Umayam L.A."/>
            <person name="Ermolaeva M.D."/>
            <person name="Salzberg S.L."/>
            <person name="Delcher A."/>
            <person name="Utterback T.R."/>
            <person name="Weidman J.F."/>
            <person name="Khouri H.M."/>
            <person name="Gill J."/>
            <person name="Mikula A."/>
            <person name="Bishai W."/>
            <person name="Jacobs W.R. Jr."/>
            <person name="Venter J.C."/>
            <person name="Fraser C.M."/>
        </authorList>
    </citation>
    <scope>NUCLEOTIDE SEQUENCE [LARGE SCALE GENOMIC DNA]</scope>
    <source>
        <strain>CDC 1551 / Oshkosh</strain>
    </source>
</reference>
<sequence>MKTVVVSGASVAGTAAAYWLGRHGYSVTMVERHPGLRPGGQAIDVRGPALDVLERMGLLAAAQEHKTRIRGASFVDRDGNELFRDTESTPTGGPVNSPDIELLRDDLVELLYGATQPSVEYLFDDSISTLQDDGDSVRVTFERAAAREFDLVIGADGLHSNVRRLVFGPEEQFVKRLGTHAAIFTVPNFLELDYWQTWHYGDSTMAGVYSARNNTEARAALAFMDTELRIDYRDTEAQFAELQRRMAEDGWVRAQLLHYMRSAPDFYFDEMSQILMDRWSRGRVALVGDAGYCCSPLSGQGTSVALLGAYILAGELKAAGDDYQLGFANYHAEFHGFVERNQWLVSDNIPGGAPIPQEEFERIVHSITIKDY</sequence>
<name>Y1260_MYCTO</name>
<dbReference type="EMBL" id="AE000516">
    <property type="protein sequence ID" value="AAK45557.1"/>
    <property type="status" value="ALT_INIT"/>
    <property type="molecule type" value="Genomic_DNA"/>
</dbReference>
<dbReference type="PIR" id="D70753">
    <property type="entry name" value="D70753"/>
</dbReference>
<dbReference type="RefSeq" id="WP_003406361.1">
    <property type="nucleotide sequence ID" value="NZ_KK341227.1"/>
</dbReference>
<dbReference type="SMR" id="P9WM50"/>
<dbReference type="KEGG" id="mtc:MT1298"/>
<dbReference type="PATRIC" id="fig|83331.31.peg.1402"/>
<dbReference type="HOGENOM" id="CLU_009665_1_0_11"/>
<dbReference type="Proteomes" id="UP000001020">
    <property type="component" value="Chromosome"/>
</dbReference>
<dbReference type="GO" id="GO:0071949">
    <property type="term" value="F:FAD binding"/>
    <property type="evidence" value="ECO:0007669"/>
    <property type="project" value="InterPro"/>
</dbReference>
<dbReference type="Gene3D" id="3.30.9.10">
    <property type="entry name" value="D-Amino Acid Oxidase, subunit A, domain 2"/>
    <property type="match status" value="1"/>
</dbReference>
<dbReference type="Gene3D" id="3.50.50.60">
    <property type="entry name" value="FAD/NAD(P)-binding domain"/>
    <property type="match status" value="1"/>
</dbReference>
<dbReference type="InterPro" id="IPR002938">
    <property type="entry name" value="FAD-bd"/>
</dbReference>
<dbReference type="InterPro" id="IPR036188">
    <property type="entry name" value="FAD/NAD-bd_sf"/>
</dbReference>
<dbReference type="InterPro" id="IPR051704">
    <property type="entry name" value="FAD_aromatic-hydroxylase"/>
</dbReference>
<dbReference type="NCBIfam" id="NF004523">
    <property type="entry name" value="PRK05868.1"/>
    <property type="match status" value="1"/>
</dbReference>
<dbReference type="PANTHER" id="PTHR46865:SF2">
    <property type="entry name" value="MONOOXYGENASE"/>
    <property type="match status" value="1"/>
</dbReference>
<dbReference type="PANTHER" id="PTHR46865">
    <property type="entry name" value="OXIDOREDUCTASE-RELATED"/>
    <property type="match status" value="1"/>
</dbReference>
<dbReference type="Pfam" id="PF01494">
    <property type="entry name" value="FAD_binding_3"/>
    <property type="match status" value="1"/>
</dbReference>
<dbReference type="PRINTS" id="PR00420">
    <property type="entry name" value="RNGMNOXGNASE"/>
</dbReference>
<dbReference type="SUPFAM" id="SSF51905">
    <property type="entry name" value="FAD/NAD(P)-binding domain"/>
    <property type="match status" value="1"/>
</dbReference>